<organism>
    <name type="scientific">Chlamydia trachomatis serovar D (strain ATCC VR-885 / DSM 19411 / UW-3/Cx)</name>
    <dbReference type="NCBI Taxonomy" id="272561"/>
    <lineage>
        <taxon>Bacteria</taxon>
        <taxon>Pseudomonadati</taxon>
        <taxon>Chlamydiota</taxon>
        <taxon>Chlamydiia</taxon>
        <taxon>Chlamydiales</taxon>
        <taxon>Chlamydiaceae</taxon>
        <taxon>Chlamydia/Chlamydophila group</taxon>
        <taxon>Chlamydia</taxon>
    </lineage>
</organism>
<keyword id="KW-0963">Cytoplasm</keyword>
<keyword id="KW-1185">Reference proteome</keyword>
<keyword id="KW-0694">RNA-binding</keyword>
<feature type="chain" id="PRO_0000163221" description="RNA-binding protein KhpA">
    <location>
        <begin position="1"/>
        <end position="78"/>
    </location>
</feature>
<feature type="domain" description="KH" evidence="1">
    <location>
        <begin position="29"/>
        <end position="78"/>
    </location>
</feature>
<dbReference type="EMBL" id="AE001273">
    <property type="protein sequence ID" value="AAC68254.1"/>
    <property type="molecule type" value="Genomic_DNA"/>
</dbReference>
<dbReference type="PIR" id="E71487">
    <property type="entry name" value="E71487"/>
</dbReference>
<dbReference type="RefSeq" id="NP_220178.1">
    <property type="nucleotide sequence ID" value="NC_000117.1"/>
</dbReference>
<dbReference type="RefSeq" id="WP_009872031.1">
    <property type="nucleotide sequence ID" value="NC_000117.1"/>
</dbReference>
<dbReference type="SMR" id="O84666"/>
<dbReference type="FunCoup" id="O84666">
    <property type="interactions" value="123"/>
</dbReference>
<dbReference type="STRING" id="272561.CT_659"/>
<dbReference type="EnsemblBacteria" id="AAC68254">
    <property type="protein sequence ID" value="AAC68254"/>
    <property type="gene ID" value="CT_659"/>
</dbReference>
<dbReference type="GeneID" id="884446"/>
<dbReference type="KEGG" id="ctr:CT_659"/>
<dbReference type="PATRIC" id="fig|272561.5.peg.725"/>
<dbReference type="HOGENOM" id="CLU_132074_1_0_0"/>
<dbReference type="InParanoid" id="O84666"/>
<dbReference type="OrthoDB" id="9812389at2"/>
<dbReference type="Proteomes" id="UP000000431">
    <property type="component" value="Chromosome"/>
</dbReference>
<dbReference type="GO" id="GO:0005737">
    <property type="term" value="C:cytoplasm"/>
    <property type="evidence" value="ECO:0007669"/>
    <property type="project" value="UniProtKB-SubCell"/>
</dbReference>
<dbReference type="GO" id="GO:0003723">
    <property type="term" value="F:RNA binding"/>
    <property type="evidence" value="ECO:0007669"/>
    <property type="project" value="UniProtKB-UniRule"/>
</dbReference>
<dbReference type="CDD" id="cd22533">
    <property type="entry name" value="KH-II_YlqC-like"/>
    <property type="match status" value="1"/>
</dbReference>
<dbReference type="Gene3D" id="3.30.300.20">
    <property type="match status" value="1"/>
</dbReference>
<dbReference type="HAMAP" id="MF_00088">
    <property type="entry name" value="KhpA"/>
    <property type="match status" value="1"/>
</dbReference>
<dbReference type="InterPro" id="IPR015946">
    <property type="entry name" value="KH_dom-like_a/b"/>
</dbReference>
<dbReference type="InterPro" id="IPR009019">
    <property type="entry name" value="KH_sf_prok-type"/>
</dbReference>
<dbReference type="InterPro" id="IPR020627">
    <property type="entry name" value="KhpA"/>
</dbReference>
<dbReference type="NCBIfam" id="NF002201">
    <property type="entry name" value="PRK01064.1"/>
    <property type="match status" value="1"/>
</dbReference>
<dbReference type="PANTHER" id="PTHR34654:SF1">
    <property type="entry name" value="RNA-BINDING PROTEIN KHPA"/>
    <property type="match status" value="1"/>
</dbReference>
<dbReference type="PANTHER" id="PTHR34654">
    <property type="entry name" value="UPF0109 PROTEIN SCO5592"/>
    <property type="match status" value="1"/>
</dbReference>
<dbReference type="Pfam" id="PF13083">
    <property type="entry name" value="KH_KhpA-B"/>
    <property type="match status" value="1"/>
</dbReference>
<dbReference type="SUPFAM" id="SSF54814">
    <property type="entry name" value="Prokaryotic type KH domain (KH-domain type II)"/>
    <property type="match status" value="1"/>
</dbReference>
<dbReference type="PROSITE" id="PS50084">
    <property type="entry name" value="KH_TYPE_1"/>
    <property type="match status" value="1"/>
</dbReference>
<accession>O84666</accession>
<protein>
    <recommendedName>
        <fullName evidence="1">RNA-binding protein KhpA</fullName>
    </recommendedName>
    <alternativeName>
        <fullName evidence="1">KH-domain protein A</fullName>
    </alternativeName>
</protein>
<name>KHPA_CHLTR</name>
<gene>
    <name evidence="1" type="primary">khpA</name>
    <name type="ordered locus">CT_659</name>
</gene>
<proteinExistence type="inferred from homology"/>
<sequence length="78" mass="8783">MKEFLAYIVKNLVDKPEEVHLKEVQGTNTIIYELTVAKGDIGKIIGKEGRTIKAIRTLLVSVASRDNVKVSLEIMEER</sequence>
<reference key="1">
    <citation type="journal article" date="1998" name="Science">
        <title>Genome sequence of an obligate intracellular pathogen of humans: Chlamydia trachomatis.</title>
        <authorList>
            <person name="Stephens R.S."/>
            <person name="Kalman S."/>
            <person name="Lammel C.J."/>
            <person name="Fan J."/>
            <person name="Marathe R."/>
            <person name="Aravind L."/>
            <person name="Mitchell W.P."/>
            <person name="Olinger L."/>
            <person name="Tatusov R.L."/>
            <person name="Zhao Q."/>
            <person name="Koonin E.V."/>
            <person name="Davis R.W."/>
        </authorList>
    </citation>
    <scope>NUCLEOTIDE SEQUENCE [LARGE SCALE GENOMIC DNA]</scope>
    <source>
        <strain>ATCC VR-885 / DSM 19411 / UW-3/Cx</strain>
    </source>
</reference>
<comment type="function">
    <text evidence="1">A probable RNA-binding protein.</text>
</comment>
<comment type="subcellular location">
    <subcellularLocation>
        <location evidence="1">Cytoplasm</location>
    </subcellularLocation>
</comment>
<comment type="similarity">
    <text evidence="1">Belongs to the KhpA RNA-binding protein family.</text>
</comment>
<evidence type="ECO:0000255" key="1">
    <source>
        <dbReference type="HAMAP-Rule" id="MF_00088"/>
    </source>
</evidence>